<reference key="1">
    <citation type="journal article" date="2004" name="J. Gen. Virol.">
        <title>Genetic content of wild-type human cytomegalovirus.</title>
        <authorList>
            <person name="Dolan A."/>
            <person name="Cunningham C."/>
            <person name="Hector R.D."/>
            <person name="Hassan-Walker A.F."/>
            <person name="Lee L."/>
            <person name="Addison C."/>
            <person name="Dargan D.J."/>
            <person name="McGeoch D.J."/>
            <person name="Gatherer D."/>
            <person name="Emery V.C."/>
            <person name="Griffiths P.D."/>
            <person name="Sinzger C."/>
            <person name="McSharry B.P."/>
            <person name="Wilkinson G.W.G."/>
            <person name="Davison A.J."/>
        </authorList>
    </citation>
    <scope>NUCLEOTIDE SEQUENCE [LARGE SCALE GENOMIC DNA]</scope>
</reference>
<keyword id="KW-1185">Reference proteome</keyword>
<feature type="chain" id="PRO_0000418235" description="Protein RL5A">
    <location>
        <begin position="1"/>
        <end position="95"/>
    </location>
</feature>
<proteinExistence type="predicted"/>
<accession>F5HF23</accession>
<organismHost>
    <name type="scientific">Homo sapiens</name>
    <name type="common">Human</name>
    <dbReference type="NCBI Taxonomy" id="9606"/>
</organismHost>
<protein>
    <recommendedName>
        <fullName>Protein RL5A</fullName>
    </recommendedName>
</protein>
<gene>
    <name type="primary">RL5A</name>
</gene>
<sequence>MDMRKLNTSQGRNLTTVDDRRRFSIGWETWDDGGESLYDVTNNGTTVINTTACVSSCSHTSLVLCNMTQQTDSLYGVGHRLNDEEDGELWRVSVS</sequence>
<dbReference type="EMBL" id="AY446894">
    <property type="protein sequence ID" value="AAR31562.1"/>
    <property type="molecule type" value="Genomic_DNA"/>
</dbReference>
<dbReference type="RefSeq" id="YP_081456.1">
    <property type="nucleotide sequence ID" value="NC_006273.2"/>
</dbReference>
<dbReference type="SMR" id="F5HF23"/>
<dbReference type="DNASU" id="3077469"/>
<dbReference type="GeneID" id="3077469"/>
<dbReference type="KEGG" id="vg:3077469"/>
<dbReference type="Proteomes" id="UP000000938">
    <property type="component" value="Segment"/>
</dbReference>
<dbReference type="InterPro" id="IPR024349">
    <property type="entry name" value="HHV5_RL5A/RL6"/>
</dbReference>
<dbReference type="Pfam" id="PF11088">
    <property type="entry name" value="RL11D"/>
    <property type="match status" value="1"/>
</dbReference>
<organism>
    <name type="scientific">Human cytomegalovirus (strain Merlin)</name>
    <name type="common">HHV-5</name>
    <name type="synonym">Human herpesvirus 5</name>
    <dbReference type="NCBI Taxonomy" id="295027"/>
    <lineage>
        <taxon>Viruses</taxon>
        <taxon>Duplodnaviria</taxon>
        <taxon>Heunggongvirae</taxon>
        <taxon>Peploviricota</taxon>
        <taxon>Herviviricetes</taxon>
        <taxon>Herpesvirales</taxon>
        <taxon>Orthoherpesviridae</taxon>
        <taxon>Betaherpesvirinae</taxon>
        <taxon>Cytomegalovirus</taxon>
        <taxon>Cytomegalovirus humanbeta5</taxon>
        <taxon>Human cytomegalovirus</taxon>
    </lineage>
</organism>
<name>RL5A_HCMVM</name>